<accession>B2W1P8</accession>
<comment type="function">
    <text evidence="1">Required for the post-translational delivery of tail-anchored (TA) proteins to the endoplasmic reticulum. Acts as a membrane receptor for soluble get3, which recognizes and selectively binds the transmembrane domain of TA proteins in the cytosol.</text>
</comment>
<comment type="subunit">
    <text evidence="1">Interacts with get3.</text>
</comment>
<comment type="subcellular location">
    <subcellularLocation>
        <location evidence="1">Endoplasmic reticulum membrane</location>
        <topology evidence="1">Multi-pass membrane protein</topology>
    </subcellularLocation>
</comment>
<comment type="similarity">
    <text evidence="1">Belongs to the WRB/GET1 family.</text>
</comment>
<protein>
    <recommendedName>
        <fullName evidence="1">Protein get1</fullName>
    </recommendedName>
    <alternativeName>
        <fullName evidence="1">Guided entry of tail-anchored proteins 1</fullName>
    </alternativeName>
</protein>
<organism>
    <name type="scientific">Pyrenophora tritici-repentis (strain Pt-1C-BFP)</name>
    <name type="common">Wheat tan spot fungus</name>
    <name type="synonym">Drechslera tritici-repentis</name>
    <dbReference type="NCBI Taxonomy" id="426418"/>
    <lineage>
        <taxon>Eukaryota</taxon>
        <taxon>Fungi</taxon>
        <taxon>Dikarya</taxon>
        <taxon>Ascomycota</taxon>
        <taxon>Pezizomycotina</taxon>
        <taxon>Dothideomycetes</taxon>
        <taxon>Pleosporomycetidae</taxon>
        <taxon>Pleosporales</taxon>
        <taxon>Pleosporineae</taxon>
        <taxon>Pleosporaceae</taxon>
        <taxon>Pyrenophora</taxon>
    </lineage>
</organism>
<feature type="chain" id="PRO_0000388613" description="Protein get1">
    <location>
        <begin position="1"/>
        <end position="215"/>
    </location>
</feature>
<feature type="topological domain" description="Lumenal" evidence="1">
    <location>
        <begin position="1"/>
        <end position="4"/>
    </location>
</feature>
<feature type="transmembrane region" description="Helical" evidence="1">
    <location>
        <begin position="5"/>
        <end position="24"/>
    </location>
</feature>
<feature type="topological domain" description="Cytoplasmic" evidence="1">
    <location>
        <begin position="25"/>
        <end position="110"/>
    </location>
</feature>
<feature type="transmembrane region" description="Helical" evidence="1">
    <location>
        <begin position="111"/>
        <end position="131"/>
    </location>
</feature>
<feature type="topological domain" description="Lumenal" evidence="1">
    <location>
        <begin position="132"/>
        <end position="155"/>
    </location>
</feature>
<feature type="transmembrane region" description="Helical" evidence="1">
    <location>
        <begin position="156"/>
        <end position="172"/>
    </location>
</feature>
<feature type="topological domain" description="Cytoplasmic" evidence="1">
    <location>
        <begin position="173"/>
        <end position="215"/>
    </location>
</feature>
<feature type="region of interest" description="Disordered" evidence="2">
    <location>
        <begin position="192"/>
        <end position="215"/>
    </location>
</feature>
<feature type="coiled-coil region" evidence="1">
    <location>
        <begin position="45"/>
        <end position="96"/>
    </location>
</feature>
<name>GET1_PYRTR</name>
<evidence type="ECO:0000255" key="1">
    <source>
        <dbReference type="HAMAP-Rule" id="MF_03113"/>
    </source>
</evidence>
<evidence type="ECO:0000256" key="2">
    <source>
        <dbReference type="SAM" id="MobiDB-lite"/>
    </source>
</evidence>
<keyword id="KW-0175">Coiled coil</keyword>
<keyword id="KW-0256">Endoplasmic reticulum</keyword>
<keyword id="KW-0472">Membrane</keyword>
<keyword id="KW-1185">Reference proteome</keyword>
<keyword id="KW-0812">Transmembrane</keyword>
<keyword id="KW-1133">Transmembrane helix</keyword>
<keyword id="KW-0813">Transport</keyword>
<reference key="1">
    <citation type="journal article" date="2013" name="G3 (Bethesda)">
        <title>Comparative genomics of a plant-pathogenic fungus, Pyrenophora tritici-repentis, reveals transduplication and the impact of repeat elements on pathogenicity and population divergence.</title>
        <authorList>
            <person name="Manning V.A."/>
            <person name="Pandelova I."/>
            <person name="Dhillon B."/>
            <person name="Wilhelm L.J."/>
            <person name="Goodwin S.B."/>
            <person name="Berlin A.M."/>
            <person name="Figueroa M."/>
            <person name="Freitag M."/>
            <person name="Hane J.K."/>
            <person name="Henrissat B."/>
            <person name="Holman W.H."/>
            <person name="Kodira C.D."/>
            <person name="Martin J."/>
            <person name="Oliver R.P."/>
            <person name="Robbertse B."/>
            <person name="Schackwitz W."/>
            <person name="Schwartz D.C."/>
            <person name="Spatafora J.W."/>
            <person name="Turgeon B.G."/>
            <person name="Yandava C."/>
            <person name="Young S."/>
            <person name="Zhou S."/>
            <person name="Zeng Q."/>
            <person name="Grigoriev I.V."/>
            <person name="Ma L.-J."/>
            <person name="Ciuffetti L.M."/>
        </authorList>
    </citation>
    <scope>NUCLEOTIDE SEQUENCE [LARGE SCALE GENOMIC DNA]</scope>
    <source>
        <strain>Pt-1C-BFP</strain>
    </source>
</reference>
<sequence>MPSLLLVVFILQLLLHIINTVGANTVNELLWVLYNKLPTPTSGSAQRCQVLKQDIVRLKRELGNTSPQDNFSKWAKLDRQHNKAMAEYQKLDGSLRSHQATFTSAVSTVRWLGTQGLRFVLQFWFSRSPMFWMPAGWVPYYVEWILSFPRAPLGSVSINVWGIACASIISLAAEATAAIWVLVTHKPTPMAAEKQREKQEAMAFSANQKPAEKEL</sequence>
<proteinExistence type="inferred from homology"/>
<gene>
    <name type="primary">get1</name>
    <name type="ORF">PTRG_04383</name>
</gene>
<dbReference type="EMBL" id="DS231617">
    <property type="protein sequence ID" value="EDU47221.1"/>
    <property type="molecule type" value="Genomic_DNA"/>
</dbReference>
<dbReference type="RefSeq" id="XP_001934716.1">
    <property type="nucleotide sequence ID" value="XM_001934681.1"/>
</dbReference>
<dbReference type="SMR" id="B2W1P8"/>
<dbReference type="STRING" id="426418.B2W1P8"/>
<dbReference type="EnsemblFungi" id="EDU47221">
    <property type="protein sequence ID" value="EDU47221"/>
    <property type="gene ID" value="PTRG_04383"/>
</dbReference>
<dbReference type="GeneID" id="6342621"/>
<dbReference type="KEGG" id="ptrr:6342621"/>
<dbReference type="eggNOG" id="KOG4253">
    <property type="taxonomic scope" value="Eukaryota"/>
</dbReference>
<dbReference type="HOGENOM" id="CLU_089418_1_0_1"/>
<dbReference type="InParanoid" id="B2W1P8"/>
<dbReference type="OMA" id="AEWIISF"/>
<dbReference type="OrthoDB" id="22642at28556"/>
<dbReference type="Proteomes" id="UP000001471">
    <property type="component" value="Unassembled WGS sequence"/>
</dbReference>
<dbReference type="GO" id="GO:0005789">
    <property type="term" value="C:endoplasmic reticulum membrane"/>
    <property type="evidence" value="ECO:0007669"/>
    <property type="project" value="UniProtKB-SubCell"/>
</dbReference>
<dbReference type="GO" id="GO:0043529">
    <property type="term" value="C:GET complex"/>
    <property type="evidence" value="ECO:0007669"/>
    <property type="project" value="InterPro"/>
</dbReference>
<dbReference type="GO" id="GO:0043495">
    <property type="term" value="F:protein-membrane adaptor activity"/>
    <property type="evidence" value="ECO:0007669"/>
    <property type="project" value="TreeGrafter"/>
</dbReference>
<dbReference type="GO" id="GO:0071816">
    <property type="term" value="P:tail-anchored membrane protein insertion into ER membrane"/>
    <property type="evidence" value="ECO:0007669"/>
    <property type="project" value="InterPro"/>
</dbReference>
<dbReference type="FunFam" id="1.10.287.660:FF:000006">
    <property type="entry name" value="Protein GET1"/>
    <property type="match status" value="1"/>
</dbReference>
<dbReference type="Gene3D" id="1.10.287.660">
    <property type="entry name" value="Helix hairpin bin"/>
    <property type="match status" value="1"/>
</dbReference>
<dbReference type="HAMAP" id="MF_03113">
    <property type="entry name" value="Get1"/>
    <property type="match status" value="1"/>
</dbReference>
<dbReference type="InterPro" id="IPR028945">
    <property type="entry name" value="Get1"/>
</dbReference>
<dbReference type="InterPro" id="IPR027538">
    <property type="entry name" value="Get1_fungi"/>
</dbReference>
<dbReference type="InterPro" id="IPR029012">
    <property type="entry name" value="Helix_hairpin_bin_sf"/>
</dbReference>
<dbReference type="PANTHER" id="PTHR42650:SF1">
    <property type="entry name" value="GUIDED ENTRY OF TAIL-ANCHORED PROTEINS FACTOR 1"/>
    <property type="match status" value="1"/>
</dbReference>
<dbReference type="PANTHER" id="PTHR42650">
    <property type="entry name" value="TAIL-ANCHORED PROTEIN INSERTION RECEPTOR WRB"/>
    <property type="match status" value="1"/>
</dbReference>
<dbReference type="Pfam" id="PF04420">
    <property type="entry name" value="CHD5"/>
    <property type="match status" value="1"/>
</dbReference>